<proteinExistence type="evidence at transcript level"/>
<gene>
    <name evidence="8" type="primary">inpA</name>
    <name type="ORF">ANIA_03495</name>
</gene>
<feature type="chain" id="PRO_0000444108" description="Nonribosomal peptide synthetase inpA">
    <location>
        <begin position="1"/>
        <end position="1480"/>
    </location>
</feature>
<feature type="domain" description="Carrier" evidence="3">
    <location>
        <begin position="1003"/>
        <end position="1082"/>
    </location>
</feature>
<feature type="region of interest" description="Disordered" evidence="4">
    <location>
        <begin position="1"/>
        <end position="24"/>
    </location>
</feature>
<feature type="region of interest" description="Condensation" evidence="2">
    <location>
        <begin position="44"/>
        <end position="458"/>
    </location>
</feature>
<feature type="region of interest" description="Adenylation" evidence="2">
    <location>
        <begin position="479"/>
        <end position="871"/>
    </location>
</feature>
<feature type="region of interest" description="Thioesterase (TE) domain" evidence="2">
    <location>
        <begin position="1117"/>
        <end position="1436"/>
    </location>
</feature>
<feature type="compositionally biased region" description="Low complexity" evidence="4">
    <location>
        <begin position="1"/>
        <end position="17"/>
    </location>
</feature>
<feature type="modified residue" description="O-(pantetheine 4'-phosphoryl)serine" evidence="3">
    <location>
        <position position="1041"/>
    </location>
</feature>
<protein>
    <recommendedName>
        <fullName evidence="8">Nonribosomal peptide synthetase inpA</fullName>
        <ecNumber evidence="11">6.3.2.-</ecNumber>
    </recommendedName>
    <alternativeName>
        <fullName evidence="9">Fellutamide B biosynthesis cluster protein A</fullName>
    </alternativeName>
    <alternativeName>
        <fullName evidence="8">Inp cluster protein A</fullName>
    </alternativeName>
    <alternativeName>
        <fullName evidence="7">Interacting NRPS system protein inpA</fullName>
    </alternativeName>
</protein>
<keyword id="KW-0436">Ligase</keyword>
<keyword id="KW-0596">Phosphopantetheine</keyword>
<keyword id="KW-0597">Phosphoprotein</keyword>
<keyword id="KW-1185">Reference proteome</keyword>
<comment type="function">
    <text evidence="6 11 12">Nonribosomal peptide synthetase; part of the inp gene cluster that mediates the biosynthesis of fellutamide B, a mycotoxin that acts as a proteasome inhibitor (PubMed:18804170, PubMed:20952652, PubMed:27294372). In the first step of fellutabmide B biosynthesis, inpC activates 3-hydroxydodecanoic acid to generate 3-hydroxydodecanoyl-AMP that is then loaded onto the T0 domain of inpB (PubMed:27294372). The 3-hydroxydodecanoyl-S-phosphopantetheinyl-T0 is sequentially extended with L-Asn and L-Gln by the two CAT modules of inpB (PubMed:27294372). The linear lipodipeptide from inpB is then transferred onto inpA for the addition of the third amino acid, L-Leu (PubMed:27294372). Reductive releasing of the lipotripeptide by the TE domain of inpA produces (2S)-fellutamide B (PubMed:27294372). InpF might be involved in the release and transfer of the lipodipeptide from inpB to inpA (PubMed:27294372). The inp cluster-encoded proteasome subunit inpE confers resistance to internally produced fellutamides (PubMed:27294372). The MFS efflux transporter inpD may contribute to fellutamide resistance as well (PubMed:27294372).</text>
</comment>
<comment type="pathway">
    <text evidence="6">Secondary metabolite biosynthesis.</text>
</comment>
<comment type="induction">
    <text evidence="5">Expression is positively regulated by the secondary metabolism cross-pathway regulator scpR (PubMed:20952652).</text>
</comment>
<comment type="domain">
    <text evidence="1 11">NRP synthetases are composed of discrete domains (adenylation (A), thiolation (T) or peptidyl carrier protein (PCP) and condensation (C) domains) which when grouped together are referred to as a single module (By similarity). Each module is responsible for the recognition (via the A domain) and incorporation of a single amino acid into the growing peptide product (By similarity). Thus, an NRP synthetase is generally composed of one or more modules and can terminate in a thioesterase domain (TE) that releases the newly synthesized peptide from the enzyme (By similarity). Occasionally, methyltransferase domains (responsible for amino acid methylation) are present within the NRP synthetase (By similarity). InpA has the following architecture: C-A-T-TE (PubMed:18804170).</text>
</comment>
<comment type="disruption phenotype">
    <text evidence="6">Eliminates the production of fellutamides (PubMed:27294372).</text>
</comment>
<comment type="similarity">
    <text evidence="10">Belongs to the NRP synthetase family.</text>
</comment>
<sequence length="1480" mass="163417">MSHSMSSSSSSSSSSSSSRDEGQSRLNNVLSNIAKQCRTTSAQVQDVYPCTPLQQGLFALSLTSPGAYMAQHVFRLQPFVDQGRMKQAWNVVLQKHAILRTRIVMLGENAMQVVLKQSPEWRNCSDLRAYLDADQSITLQTGEPLTRWAISDTHLVWSAHHSVYDGFSVELILRDVATAYADGEIPPRPSFRQFIQRMFQQKQKSLTEAYWKKKTAHLDEVDTFPRLPASTYRPRPNSVYKHESSLAIDGPSGVTLSTIANAAWGLVQSSHLGSEQVSFGTTLSGRNANMPDIDKVVGPTLATVPVLLDVRSSQSVADFLQATQAYFTELIPHQHIGLQNLRRLNRATEAVCNFQTLFAFQPGMTETQGQSPYGHLLTAENKDKVEAAFYSYALTFQCSLAGTGIIKVLASYDDKIISSSQMKRLVFQFEHIVSQLISSNGSKRLSEIQLISPQDLDQLDIWKRKMESYEQLLPLDAIQRHIDTRPDATAVAAWDGTLSYVELDAFATRLATWLVHEQKVGPEIVIPICFDRSQWMIVSIFGVLKAGGAFLLLDPIYPENRLRYMIKMVNARTILVSESCRARFEGVPGAILAVNAAWFETHTHASIPMRELPVDRALYLVFTSGSTGQPKGVIVTHASYAASAAGHMPALGMNENTRQLFFASPAFDLSIYEILGSLMCGGTVCVPTEEDRNGSVAPVIRDMNVNLISLTSSYARHLRPEDVPRLETLALVGEPLARDVQRVWANRLTLINAYGPAECSVVSTVKRPVTLDSNPANIGTTVAGRAWVVHPKDHEILLPIGATGELLLEGDHLARGYLNDEEKTAAAYIFGPYWAPSPTPRRFYKTGDLVHFDEDGSIVFEGRKDSQVKIRGQRVEIAEIEHHLARLFPNAAGAAVDVFKHEYHVHLVAFLFCDKESWNSSDTPADILQRLGDVNVSTMSHIKQQLEQVMPHHMVPTRYQIWARMPTSLAGKLDRKALRKELGNQSTTVIELDETSTEFPVIDSTNKVALRLNHKILDLASEEKTTLDGRDFPLSILGLDSIQLITIVTFIRSEYGAKMTVETLYDLKLTVTGLAAMITSPHDRPAEAAPTLDLSKELQRVYRELTRRSESIKHKRKVFLTGATGLLGSQILRQLLADPSVQRVIVHVRANDAAKGMARVVSAATLAKWWSSSYANRVECWPGDLGMPQLGLQPEQWRMLCGTADAGAPITSVIHNGAAVQWQAPYQALKAVNVDSTVELLTAMAQWSEPGSFTFVSGGLKRSPGQDLESFMKSLEQANGYSQSKFVAEELVSRFAGHQSTHRVSIVRPGWVIGTEKDAVPNTDDFLWKLVQACIQIGAYPAEGGDLWLAVADAEEVATRILATTFAASGESPSVDNVEIGTTVSRFWELIKVQTGMELTQMSAEDWKQAAQDFAASQESEQTFLPVLAMLQDPQMEFGVQRPANGGPPSNVNAAIRSNIKTLVETGFLSDSSEVVIVED</sequence>
<name>INPA_EMENI</name>
<reference key="1">
    <citation type="journal article" date="2005" name="Nature">
        <title>Sequencing of Aspergillus nidulans and comparative analysis with A. fumigatus and A. oryzae.</title>
        <authorList>
            <person name="Galagan J.E."/>
            <person name="Calvo S.E."/>
            <person name="Cuomo C."/>
            <person name="Ma L.-J."/>
            <person name="Wortman J.R."/>
            <person name="Batzoglou S."/>
            <person name="Lee S.-I."/>
            <person name="Bastuerkmen M."/>
            <person name="Spevak C.C."/>
            <person name="Clutterbuck J."/>
            <person name="Kapitonov V."/>
            <person name="Jurka J."/>
            <person name="Scazzocchio C."/>
            <person name="Farman M.L."/>
            <person name="Butler J."/>
            <person name="Purcell S."/>
            <person name="Harris S."/>
            <person name="Braus G.H."/>
            <person name="Draht O."/>
            <person name="Busch S."/>
            <person name="D'Enfert C."/>
            <person name="Bouchier C."/>
            <person name="Goldman G.H."/>
            <person name="Bell-Pedersen D."/>
            <person name="Griffiths-Jones S."/>
            <person name="Doonan J.H."/>
            <person name="Yu J."/>
            <person name="Vienken K."/>
            <person name="Pain A."/>
            <person name="Freitag M."/>
            <person name="Selker E.U."/>
            <person name="Archer D.B."/>
            <person name="Penalva M.A."/>
            <person name="Oakley B.R."/>
            <person name="Momany M."/>
            <person name="Tanaka T."/>
            <person name="Kumagai T."/>
            <person name="Asai K."/>
            <person name="Machida M."/>
            <person name="Nierman W.C."/>
            <person name="Denning D.W."/>
            <person name="Caddick M.X."/>
            <person name="Hynes M."/>
            <person name="Paoletti M."/>
            <person name="Fischer R."/>
            <person name="Miller B.L."/>
            <person name="Dyer P.S."/>
            <person name="Sachs M.S."/>
            <person name="Osmani S.A."/>
            <person name="Birren B.W."/>
        </authorList>
    </citation>
    <scope>NUCLEOTIDE SEQUENCE [LARGE SCALE GENOMIC DNA]</scope>
    <source>
        <strain>FGSC A4 / ATCC 38163 / CBS 112.46 / NRRL 194 / M139</strain>
    </source>
</reference>
<reference key="2">
    <citation type="journal article" date="2009" name="Fungal Genet. Biol.">
        <title>The 2008 update of the Aspergillus nidulans genome annotation: a community effort.</title>
        <authorList>
            <person name="Wortman J.R."/>
            <person name="Gilsenan J.M."/>
            <person name="Joardar V."/>
            <person name="Deegan J."/>
            <person name="Clutterbuck J."/>
            <person name="Andersen M.R."/>
            <person name="Archer D."/>
            <person name="Bencina M."/>
            <person name="Braus G."/>
            <person name="Coutinho P."/>
            <person name="von Dohren H."/>
            <person name="Doonan J."/>
            <person name="Driessen A.J."/>
            <person name="Durek P."/>
            <person name="Espeso E."/>
            <person name="Fekete E."/>
            <person name="Flipphi M."/>
            <person name="Estrada C.G."/>
            <person name="Geysens S."/>
            <person name="Goldman G."/>
            <person name="de Groot P.W."/>
            <person name="Hansen K."/>
            <person name="Harris S.D."/>
            <person name="Heinekamp T."/>
            <person name="Helmstaedt K."/>
            <person name="Henrissat B."/>
            <person name="Hofmann G."/>
            <person name="Homan T."/>
            <person name="Horio T."/>
            <person name="Horiuchi H."/>
            <person name="James S."/>
            <person name="Jones M."/>
            <person name="Karaffa L."/>
            <person name="Karanyi Z."/>
            <person name="Kato M."/>
            <person name="Keller N."/>
            <person name="Kelly D.E."/>
            <person name="Kiel J.A."/>
            <person name="Kim J.M."/>
            <person name="van der Klei I.J."/>
            <person name="Klis F.M."/>
            <person name="Kovalchuk A."/>
            <person name="Krasevec N."/>
            <person name="Kubicek C.P."/>
            <person name="Liu B."/>
            <person name="Maccabe A."/>
            <person name="Meyer V."/>
            <person name="Mirabito P."/>
            <person name="Miskei M."/>
            <person name="Mos M."/>
            <person name="Mullins J."/>
            <person name="Nelson D.R."/>
            <person name="Nielsen J."/>
            <person name="Oakley B.R."/>
            <person name="Osmani S.A."/>
            <person name="Pakula T."/>
            <person name="Paszewski A."/>
            <person name="Paulsen I."/>
            <person name="Pilsyk S."/>
            <person name="Pocsi I."/>
            <person name="Punt P.J."/>
            <person name="Ram A.F."/>
            <person name="Ren Q."/>
            <person name="Robellet X."/>
            <person name="Robson G."/>
            <person name="Seiboth B."/>
            <person name="van Solingen P."/>
            <person name="Specht T."/>
            <person name="Sun J."/>
            <person name="Taheri-Talesh N."/>
            <person name="Takeshita N."/>
            <person name="Ussery D."/>
            <person name="vanKuyk P.A."/>
            <person name="Visser H."/>
            <person name="van de Vondervoort P.J."/>
            <person name="de Vries R.P."/>
            <person name="Walton J."/>
            <person name="Xiang X."/>
            <person name="Xiong Y."/>
            <person name="Zeng A.P."/>
            <person name="Brandt B.W."/>
            <person name="Cornell M.J."/>
            <person name="van den Hondel C.A."/>
            <person name="Visser J."/>
            <person name="Oliver S.G."/>
            <person name="Turner G."/>
        </authorList>
    </citation>
    <scope>GENOME REANNOTATION</scope>
    <source>
        <strain>FGSC A4 / ATCC 38163 / CBS 112.46 / NRRL 194 / M139</strain>
    </source>
</reference>
<reference key="3">
    <citation type="journal article" date="2009" name="Fungal Genet. Biol.">
        <title>A survey of nonribosomal peptide synthetase (NRPS) genes in Aspergillus nidulans.</title>
        <authorList>
            <person name="von Doehren H."/>
        </authorList>
    </citation>
    <scope>IDENTIFICATION</scope>
    <scope>FUNCTION</scope>
</reference>
<reference key="4">
    <citation type="journal article" date="2010" name="Appl. Environ. Microbiol.">
        <title>Activation of a silent fungal polyketide biosynthesis pathway through regulatory cross talk with a cryptic nonribosomal peptide synthetase gene cluster.</title>
        <authorList>
            <person name="Bergmann S."/>
            <person name="Funk A.N."/>
            <person name="Scherlach K."/>
            <person name="Schroeckh V."/>
            <person name="Shelest E."/>
            <person name="Horn U."/>
            <person name="Hertweck C."/>
            <person name="Brakhage A.A."/>
        </authorList>
    </citation>
    <scope>INDUCTION</scope>
</reference>
<reference key="5">
    <citation type="journal article" date="2016" name="ACS Chem. Biol.">
        <title>Resistance gene-guided genome mining: serial promoter exchanges in Aspergillus nidulans reveal the biosynthetic pathway for fellutamide B, a proteasome inhibitor.</title>
        <authorList>
            <person name="Yeh H.H."/>
            <person name="Ahuja M."/>
            <person name="Chiang Y.M."/>
            <person name="Oakley C.E."/>
            <person name="Moore S."/>
            <person name="Yoon O."/>
            <person name="Hajovsky H."/>
            <person name="Bok J.W."/>
            <person name="Keller N.P."/>
            <person name="Wang C.C."/>
            <person name="Oakley B.R."/>
        </authorList>
    </citation>
    <scope>FUNCTION</scope>
    <scope>DISRUPTION PHENOTYPE</scope>
    <scope>PATHWAY</scope>
</reference>
<organism>
    <name type="scientific">Emericella nidulans (strain FGSC A4 / ATCC 38163 / CBS 112.46 / NRRL 194 / M139)</name>
    <name type="common">Aspergillus nidulans</name>
    <dbReference type="NCBI Taxonomy" id="227321"/>
    <lineage>
        <taxon>Eukaryota</taxon>
        <taxon>Fungi</taxon>
        <taxon>Dikarya</taxon>
        <taxon>Ascomycota</taxon>
        <taxon>Pezizomycotina</taxon>
        <taxon>Eurotiomycetes</taxon>
        <taxon>Eurotiomycetidae</taxon>
        <taxon>Eurotiales</taxon>
        <taxon>Aspergillaceae</taxon>
        <taxon>Aspergillus</taxon>
        <taxon>Aspergillus subgen. Nidulantes</taxon>
    </lineage>
</organism>
<evidence type="ECO:0000250" key="1">
    <source>
        <dbReference type="UniProtKB" id="A0A144KPJ6"/>
    </source>
</evidence>
<evidence type="ECO:0000255" key="2"/>
<evidence type="ECO:0000255" key="3">
    <source>
        <dbReference type="PROSITE-ProRule" id="PRU00258"/>
    </source>
</evidence>
<evidence type="ECO:0000256" key="4">
    <source>
        <dbReference type="SAM" id="MobiDB-lite"/>
    </source>
</evidence>
<evidence type="ECO:0000269" key="5">
    <source>
    </source>
</evidence>
<evidence type="ECO:0000269" key="6">
    <source>
    </source>
</evidence>
<evidence type="ECO:0000303" key="7">
    <source>
    </source>
</evidence>
<evidence type="ECO:0000303" key="8">
    <source>
    </source>
</evidence>
<evidence type="ECO:0000303" key="9">
    <source>
    </source>
</evidence>
<evidence type="ECO:0000305" key="10"/>
<evidence type="ECO:0000305" key="11">
    <source>
    </source>
</evidence>
<evidence type="ECO:0000305" key="12">
    <source>
    </source>
</evidence>
<accession>Q5B7I5</accession>
<accession>C8V546</accession>
<dbReference type="EC" id="6.3.2.-" evidence="11"/>
<dbReference type="EMBL" id="BN001302">
    <property type="protein sequence ID" value="CBF76038.1"/>
    <property type="molecule type" value="Genomic_DNA"/>
</dbReference>
<dbReference type="RefSeq" id="XP_661099.1">
    <property type="nucleotide sequence ID" value="XM_656007.1"/>
</dbReference>
<dbReference type="SMR" id="Q5B7I5"/>
<dbReference type="STRING" id="227321.Q5B7I5"/>
<dbReference type="EnsemblFungi" id="CBF76038">
    <property type="protein sequence ID" value="CBF76038"/>
    <property type="gene ID" value="ANIA_03495"/>
</dbReference>
<dbReference type="GeneID" id="2872916"/>
<dbReference type="KEGG" id="ani:ANIA_03495"/>
<dbReference type="eggNOG" id="KOG1178">
    <property type="taxonomic scope" value="Eukaryota"/>
</dbReference>
<dbReference type="HOGENOM" id="CLU_000022_60_8_1"/>
<dbReference type="InParanoid" id="Q5B7I5"/>
<dbReference type="OMA" id="QTKFMSQ"/>
<dbReference type="OrthoDB" id="416786at2759"/>
<dbReference type="Proteomes" id="UP000000560">
    <property type="component" value="Chromosome II"/>
</dbReference>
<dbReference type="GO" id="GO:0016874">
    <property type="term" value="F:ligase activity"/>
    <property type="evidence" value="ECO:0007669"/>
    <property type="project" value="UniProtKB-KW"/>
</dbReference>
<dbReference type="CDD" id="cd05918">
    <property type="entry name" value="A_NRPS_SidN3_like"/>
    <property type="match status" value="1"/>
</dbReference>
<dbReference type="CDD" id="cd19545">
    <property type="entry name" value="FUM14_C_NRPS-like"/>
    <property type="match status" value="1"/>
</dbReference>
<dbReference type="Gene3D" id="3.30.300.30">
    <property type="match status" value="1"/>
</dbReference>
<dbReference type="Gene3D" id="1.10.1200.10">
    <property type="entry name" value="ACP-like"/>
    <property type="match status" value="1"/>
</dbReference>
<dbReference type="Gene3D" id="3.30.559.10">
    <property type="entry name" value="Chloramphenicol acetyltransferase-like domain"/>
    <property type="match status" value="1"/>
</dbReference>
<dbReference type="Gene3D" id="3.40.50.12780">
    <property type="entry name" value="N-terminal domain of ligase-like"/>
    <property type="match status" value="1"/>
</dbReference>
<dbReference type="Gene3D" id="3.40.50.720">
    <property type="entry name" value="NAD(P)-binding Rossmann-like Domain"/>
    <property type="match status" value="1"/>
</dbReference>
<dbReference type="Gene3D" id="3.30.559.30">
    <property type="entry name" value="Nonribosomal peptide synthetase, condensation domain"/>
    <property type="match status" value="1"/>
</dbReference>
<dbReference type="InterPro" id="IPR010071">
    <property type="entry name" value="AA_adenyl_dom"/>
</dbReference>
<dbReference type="InterPro" id="IPR036736">
    <property type="entry name" value="ACP-like_sf"/>
</dbReference>
<dbReference type="InterPro" id="IPR045851">
    <property type="entry name" value="AMP-bd_C_sf"/>
</dbReference>
<dbReference type="InterPro" id="IPR020845">
    <property type="entry name" value="AMP-binding_CS"/>
</dbReference>
<dbReference type="InterPro" id="IPR000873">
    <property type="entry name" value="AMP-dep_synth/lig_dom"/>
</dbReference>
<dbReference type="InterPro" id="IPR042099">
    <property type="entry name" value="ANL_N_sf"/>
</dbReference>
<dbReference type="InterPro" id="IPR023213">
    <property type="entry name" value="CAT-like_dom_sf"/>
</dbReference>
<dbReference type="InterPro" id="IPR001242">
    <property type="entry name" value="Condensatn"/>
</dbReference>
<dbReference type="InterPro" id="IPR013120">
    <property type="entry name" value="Far_NAD-bd"/>
</dbReference>
<dbReference type="InterPro" id="IPR036291">
    <property type="entry name" value="NAD(P)-bd_dom_sf"/>
</dbReference>
<dbReference type="InterPro" id="IPR009081">
    <property type="entry name" value="PP-bd_ACP"/>
</dbReference>
<dbReference type="InterPro" id="IPR010080">
    <property type="entry name" value="Thioester_reductase-like_dom"/>
</dbReference>
<dbReference type="NCBIfam" id="TIGR01733">
    <property type="entry name" value="AA-adenyl-dom"/>
    <property type="match status" value="1"/>
</dbReference>
<dbReference type="NCBIfam" id="TIGR01746">
    <property type="entry name" value="Thioester-redct"/>
    <property type="match status" value="1"/>
</dbReference>
<dbReference type="PANTHER" id="PTHR44845">
    <property type="entry name" value="CARRIER DOMAIN-CONTAINING PROTEIN"/>
    <property type="match status" value="1"/>
</dbReference>
<dbReference type="PANTHER" id="PTHR44845:SF4">
    <property type="entry name" value="NONRIBOSOMAL PEPTIDE SYNTHASE INPA"/>
    <property type="match status" value="1"/>
</dbReference>
<dbReference type="Pfam" id="PF00501">
    <property type="entry name" value="AMP-binding"/>
    <property type="match status" value="1"/>
</dbReference>
<dbReference type="Pfam" id="PF00668">
    <property type="entry name" value="Condensation"/>
    <property type="match status" value="1"/>
</dbReference>
<dbReference type="Pfam" id="PF07993">
    <property type="entry name" value="NAD_binding_4"/>
    <property type="match status" value="1"/>
</dbReference>
<dbReference type="SUPFAM" id="SSF56801">
    <property type="entry name" value="Acetyl-CoA synthetase-like"/>
    <property type="match status" value="1"/>
</dbReference>
<dbReference type="SUPFAM" id="SSF47336">
    <property type="entry name" value="ACP-like"/>
    <property type="match status" value="1"/>
</dbReference>
<dbReference type="SUPFAM" id="SSF52777">
    <property type="entry name" value="CoA-dependent acyltransferases"/>
    <property type="match status" value="2"/>
</dbReference>
<dbReference type="SUPFAM" id="SSF51735">
    <property type="entry name" value="NAD(P)-binding Rossmann-fold domains"/>
    <property type="match status" value="1"/>
</dbReference>
<dbReference type="PROSITE" id="PS00455">
    <property type="entry name" value="AMP_BINDING"/>
    <property type="match status" value="1"/>
</dbReference>
<dbReference type="PROSITE" id="PS50075">
    <property type="entry name" value="CARRIER"/>
    <property type="match status" value="1"/>
</dbReference>